<proteinExistence type="evidence at transcript level"/>
<feature type="chain" id="PRO_0000069164" description="Type-1 angiotensin II receptor">
    <location>
        <begin position="1"/>
        <end position="359"/>
    </location>
</feature>
<feature type="topological domain" description="Extracellular" evidence="1">
    <location>
        <begin position="1"/>
        <end position="25"/>
    </location>
</feature>
<feature type="transmembrane region" description="Helical; Name=1" evidence="1">
    <location>
        <begin position="26"/>
        <end position="55"/>
    </location>
</feature>
<feature type="topological domain" description="Cytoplasmic" evidence="1">
    <location>
        <begin position="56"/>
        <end position="61"/>
    </location>
</feature>
<feature type="transmembrane region" description="Helical; Name=2" evidence="1">
    <location>
        <begin position="62"/>
        <end position="89"/>
    </location>
</feature>
<feature type="topological domain" description="Extracellular" evidence="1">
    <location>
        <begin position="90"/>
        <end position="98"/>
    </location>
</feature>
<feature type="transmembrane region" description="Helical; Name=3" evidence="1">
    <location>
        <begin position="99"/>
        <end position="125"/>
    </location>
</feature>
<feature type="topological domain" description="Cytoplasmic" evidence="1">
    <location>
        <begin position="126"/>
        <end position="141"/>
    </location>
</feature>
<feature type="transmembrane region" description="Helical; Name=4" evidence="1">
    <location>
        <begin position="142"/>
        <end position="165"/>
    </location>
</feature>
<feature type="topological domain" description="Extracellular" evidence="1">
    <location>
        <begin position="166"/>
        <end position="190"/>
    </location>
</feature>
<feature type="transmembrane region" description="Helical; Name=5" evidence="1">
    <location>
        <begin position="191"/>
        <end position="216"/>
    </location>
</feature>
<feature type="topological domain" description="Cytoplasmic" evidence="1">
    <location>
        <begin position="217"/>
        <end position="239"/>
    </location>
</feature>
<feature type="transmembrane region" description="Helical; Name=6" evidence="1">
    <location>
        <begin position="240"/>
        <end position="268"/>
    </location>
</feature>
<feature type="topological domain" description="Extracellular" evidence="1">
    <location>
        <begin position="269"/>
        <end position="278"/>
    </location>
</feature>
<feature type="transmembrane region" description="Helical; Name=7" evidence="1">
    <location>
        <begin position="279"/>
        <end position="304"/>
    </location>
</feature>
<feature type="topological domain" description="Cytoplasmic" evidence="1">
    <location>
        <begin position="305"/>
        <end position="359"/>
    </location>
</feature>
<feature type="binding site" evidence="1">
    <location>
        <position position="17"/>
    </location>
    <ligand>
        <name>angiotensin II</name>
        <dbReference type="ChEBI" id="CHEBI:58506"/>
    </ligand>
</feature>
<feature type="binding site" evidence="1">
    <location>
        <position position="167"/>
    </location>
    <ligand>
        <name>angiotensin II</name>
        <dbReference type="ChEBI" id="CHEBI:58506"/>
    </ligand>
</feature>
<feature type="binding site" evidence="1">
    <location>
        <position position="182"/>
    </location>
    <ligand>
        <name>angiotensin II</name>
        <dbReference type="ChEBI" id="CHEBI:58506"/>
    </ligand>
</feature>
<feature type="binding site" evidence="1">
    <location>
        <position position="184"/>
    </location>
    <ligand>
        <name>angiotensin II</name>
        <dbReference type="ChEBI" id="CHEBI:58506"/>
    </ligand>
</feature>
<feature type="binding site" evidence="1">
    <location>
        <position position="199"/>
    </location>
    <ligand>
        <name>angiotensin II</name>
        <dbReference type="ChEBI" id="CHEBI:58506"/>
    </ligand>
</feature>
<feature type="glycosylation site" description="N-linked (GlcNAc...) asparagine" evidence="2">
    <location>
        <position position="4"/>
    </location>
</feature>
<feature type="glycosylation site" description="N-linked (GlcNAc...) asparagine" evidence="2">
    <location>
        <position position="176"/>
    </location>
</feature>
<feature type="glycosylation site" description="N-linked (GlcNAc...) asparagine" evidence="2">
    <location>
        <position position="187"/>
    </location>
</feature>
<feature type="glycosylation site" description="N-linked (GlcNAc...) asparagine" evidence="2">
    <location>
        <position position="188"/>
    </location>
</feature>
<feature type="disulfide bond" evidence="1">
    <location>
        <begin position="18"/>
        <end position="274"/>
    </location>
</feature>
<feature type="disulfide bond" evidence="3">
    <location>
        <begin position="101"/>
        <end position="180"/>
    </location>
</feature>
<feature type="sequence conflict" description="In Ref. 2; AAB26041." evidence="5" ref="2">
    <original>Y</original>
    <variation>C</variation>
    <location>
        <position position="92"/>
    </location>
</feature>
<feature type="sequence conflict" description="In Ref. 2; AAB26041." evidence="5" ref="2">
    <original>VIIHRNIF</original>
    <variation>SSFIVIY</variation>
    <location>
        <begin position="163"/>
        <end position="170"/>
    </location>
</feature>
<comment type="function">
    <text evidence="1">Receptor for angiotensin II, a vasoconstricting peptide, which acts as a key regulator of blood pressure and sodium retention by the kidney. The activated receptor in turn couples to G-alpha proteins G(q) (GNAQ, GNA11, GNA14 or GNA15) and thus activates phospholipase C and increases the cytosolic Ca(2+) concentrations, which in turn triggers cellular responses such as stimulation of protein kinase C.</text>
</comment>
<comment type="subcellular location">
    <subcellularLocation>
        <location evidence="1">Cell membrane</location>
        <topology evidence="1">Multi-pass membrane protein</topology>
    </subcellularLocation>
</comment>
<comment type="tissue specificity">
    <text evidence="4">Adrenal medulla.</text>
</comment>
<comment type="PTM">
    <text evidence="1">C-terminal Ser or Thr residues may be phosphorylated.</text>
</comment>
<comment type="similarity">
    <text evidence="3">Belongs to the G-protein coupled receptor 1 family.</text>
</comment>
<name>AGTR1_MELGA</name>
<organism>
    <name type="scientific">Meleagris gallopavo</name>
    <name type="common">Wild turkey</name>
    <dbReference type="NCBI Taxonomy" id="9103"/>
    <lineage>
        <taxon>Eukaryota</taxon>
        <taxon>Metazoa</taxon>
        <taxon>Chordata</taxon>
        <taxon>Craniata</taxon>
        <taxon>Vertebrata</taxon>
        <taxon>Euteleostomi</taxon>
        <taxon>Archelosauria</taxon>
        <taxon>Archosauria</taxon>
        <taxon>Dinosauria</taxon>
        <taxon>Saurischia</taxon>
        <taxon>Theropoda</taxon>
        <taxon>Coelurosauria</taxon>
        <taxon>Aves</taxon>
        <taxon>Neognathae</taxon>
        <taxon>Galloanserae</taxon>
        <taxon>Galliformes</taxon>
        <taxon>Phasianidae</taxon>
        <taxon>Meleagridinae</taxon>
        <taxon>Meleagris</taxon>
    </lineage>
</organism>
<gene>
    <name type="primary">AGTR1</name>
</gene>
<protein>
    <recommendedName>
        <fullName>Type-1 angiotensin II receptor</fullName>
    </recommendedName>
    <alternativeName>
        <fullName>Angiotensin II type-1 receptor</fullName>
        <shortName>AT1 receptor</shortName>
    </alternativeName>
</protein>
<keyword id="KW-1003">Cell membrane</keyword>
<keyword id="KW-1015">Disulfide bond</keyword>
<keyword id="KW-0297">G-protein coupled receptor</keyword>
<keyword id="KW-0325">Glycoprotein</keyword>
<keyword id="KW-0472">Membrane</keyword>
<keyword id="KW-0675">Receptor</keyword>
<keyword id="KW-1185">Reference proteome</keyword>
<keyword id="KW-0807">Transducer</keyword>
<keyword id="KW-0812">Transmembrane</keyword>
<keyword id="KW-1133">Transmembrane helix</keyword>
<accession>P33396</accession>
<accession>Q92158</accession>
<reference key="1">
    <citation type="journal article" date="1993" name="Mol. Pharmacol.">
        <title>A cloned angiotensin receptor isoform from the turkey adrenal gland is pharmacologically distinct from mammalian angiotensin receptors.</title>
        <authorList>
            <person name="Murphy T.J."/>
            <person name="Nakamura Y."/>
            <person name="Takeuchi K."/>
            <person name="Alexander R.W."/>
        </authorList>
    </citation>
    <scope>NUCLEOTIDE SEQUENCE [MRNA]</scope>
    <scope>TISSUE SPECIFICITY</scope>
    <source>
        <tissue>Adrenal gland</tissue>
    </source>
</reference>
<reference key="2">
    <citation type="journal article" date="1993" name="Biochem. Biophys. Res. Commun.">
        <title>Isolation of turkey adrenocortical cell angiotensin II (AII) receptor partial cDNA: evidence for a single-copy gene expressed predominantly in the adrenal gland.</title>
        <authorList>
            <person name="Carsia R.V."/>
            <person name="McIlroy P.J."/>
            <person name="Kowalski K.I."/>
            <person name="Tilly J.L."/>
        </authorList>
    </citation>
    <scope>NUCLEOTIDE SEQUENCE [MRNA] OF 53-291</scope>
</reference>
<sequence>MVPNYSTEETVKRIHVDCPVSGRHSYIYIMVPTVYSIIFIIGIFGNSLVVIVIYCYMKLKTVASIFLLNLALADLCFLITLPLWAAYTAMEYQWPFGNCLCKLASAGISFNLYASVFLLTCLSIDRYLAIVHPVKSRIRRTMFVARVTCIVIWLLAGVASLPVIIHRNIFFAENLNMTVCGFRYDNNNTTLRVGLGLSKNLLGFLIPFLIILTSYTLIWKTLKKAYQIQRNKTRNDDIFKMIVAIVFFFFFSWIPHQVFTFLDVLIQLHVITDCKITDIVDTAMPFTICIAYFNNCLNPFFYVFFGKNFKKYFLQLIKYIPPNVSTHPSLTTKMSSLSYRPPENIRLPTKKTAGSFDTE</sequence>
<evidence type="ECO:0000250" key="1">
    <source>
        <dbReference type="UniProtKB" id="P30556"/>
    </source>
</evidence>
<evidence type="ECO:0000255" key="2"/>
<evidence type="ECO:0000255" key="3">
    <source>
        <dbReference type="PROSITE-ProRule" id="PRU00521"/>
    </source>
</evidence>
<evidence type="ECO:0000269" key="4">
    <source>
    </source>
</evidence>
<evidence type="ECO:0000305" key="5"/>
<dbReference type="EMBL" id="L23203">
    <property type="protein sequence ID" value="AAA03560.1"/>
    <property type="molecule type" value="mRNA"/>
</dbReference>
<dbReference type="EMBL" id="S58041">
    <property type="protein sequence ID" value="AAB26041.1"/>
    <property type="molecule type" value="mRNA"/>
</dbReference>
<dbReference type="PIR" id="I51372">
    <property type="entry name" value="I51372"/>
</dbReference>
<dbReference type="RefSeq" id="NP_001290120.1">
    <property type="nucleotide sequence ID" value="NM_001303191.1"/>
</dbReference>
<dbReference type="SMR" id="P33396"/>
<dbReference type="FunCoup" id="P33396">
    <property type="interactions" value="57"/>
</dbReference>
<dbReference type="GlyCosmos" id="P33396">
    <property type="glycosylation" value="4 sites, No reported glycans"/>
</dbReference>
<dbReference type="Ensembl" id="ENSMGAT00000017943.2">
    <property type="protein sequence ID" value="ENSMGAP00000016969.1"/>
    <property type="gene ID" value="ENSMGAG00000016025.2"/>
</dbReference>
<dbReference type="GeneID" id="100303701"/>
<dbReference type="KEGG" id="mgp:100303701"/>
<dbReference type="CTD" id="185"/>
<dbReference type="GeneTree" id="ENSGT01130000278303"/>
<dbReference type="HOGENOM" id="CLU_009579_8_3_1"/>
<dbReference type="InParanoid" id="P33396"/>
<dbReference type="OMA" id="QVFHFMQ"/>
<dbReference type="OrthoDB" id="8804420at2759"/>
<dbReference type="TreeFam" id="TF330024"/>
<dbReference type="Proteomes" id="UP000001645">
    <property type="component" value="Chromosome 11"/>
</dbReference>
<dbReference type="Bgee" id="ENSMGAG00000016025">
    <property type="expression patterns" value="Expressed in ovary and 11 other cell types or tissues"/>
</dbReference>
<dbReference type="GO" id="GO:0009897">
    <property type="term" value="C:external side of plasma membrane"/>
    <property type="evidence" value="ECO:0007669"/>
    <property type="project" value="TreeGrafter"/>
</dbReference>
<dbReference type="GO" id="GO:0001596">
    <property type="term" value="F:angiotensin type I receptor activity"/>
    <property type="evidence" value="ECO:0000250"/>
    <property type="project" value="UniProtKB"/>
</dbReference>
<dbReference type="GO" id="GO:0004945">
    <property type="term" value="F:angiotensin type II receptor activity"/>
    <property type="evidence" value="ECO:0007669"/>
    <property type="project" value="InterPro"/>
</dbReference>
<dbReference type="GO" id="GO:0019957">
    <property type="term" value="F:C-C chemokine binding"/>
    <property type="evidence" value="ECO:0007669"/>
    <property type="project" value="TreeGrafter"/>
</dbReference>
<dbReference type="GO" id="GO:0016493">
    <property type="term" value="F:C-C chemokine receptor activity"/>
    <property type="evidence" value="ECO:0007669"/>
    <property type="project" value="TreeGrafter"/>
</dbReference>
<dbReference type="GO" id="GO:0019722">
    <property type="term" value="P:calcium-mediated signaling"/>
    <property type="evidence" value="ECO:0007669"/>
    <property type="project" value="TreeGrafter"/>
</dbReference>
<dbReference type="GO" id="GO:0006955">
    <property type="term" value="P:immune response"/>
    <property type="evidence" value="ECO:0007669"/>
    <property type="project" value="TreeGrafter"/>
</dbReference>
<dbReference type="GO" id="GO:0002034">
    <property type="term" value="P:maintenance of blood vessel diameter homeostasis by renin-angiotensin"/>
    <property type="evidence" value="ECO:0000250"/>
    <property type="project" value="UniProtKB"/>
</dbReference>
<dbReference type="GO" id="GO:0030593">
    <property type="term" value="P:neutrophil chemotaxis"/>
    <property type="evidence" value="ECO:0007669"/>
    <property type="project" value="TreeGrafter"/>
</dbReference>
<dbReference type="GO" id="GO:0007204">
    <property type="term" value="P:positive regulation of cytosolic calcium ion concentration"/>
    <property type="evidence" value="ECO:0007669"/>
    <property type="project" value="TreeGrafter"/>
</dbReference>
<dbReference type="GO" id="GO:0019229">
    <property type="term" value="P:regulation of vasoconstriction"/>
    <property type="evidence" value="ECO:0007669"/>
    <property type="project" value="InterPro"/>
</dbReference>
<dbReference type="CDD" id="cd15192">
    <property type="entry name" value="7tmA_AT1R"/>
    <property type="match status" value="1"/>
</dbReference>
<dbReference type="FunFam" id="1.20.1070.10:FF:000088">
    <property type="entry name" value="Angiotensin II receptor type 1"/>
    <property type="match status" value="1"/>
</dbReference>
<dbReference type="Gene3D" id="1.20.1070.10">
    <property type="entry name" value="Rhodopsin 7-helix transmembrane proteins"/>
    <property type="match status" value="1"/>
</dbReference>
<dbReference type="InterPro" id="IPR000190">
    <property type="entry name" value="ATII_AT1_rcpt"/>
</dbReference>
<dbReference type="InterPro" id="IPR000248">
    <property type="entry name" value="ATII_rcpt"/>
</dbReference>
<dbReference type="InterPro" id="IPR050119">
    <property type="entry name" value="CCR1-9-like"/>
</dbReference>
<dbReference type="InterPro" id="IPR000276">
    <property type="entry name" value="GPCR_Rhodpsn"/>
</dbReference>
<dbReference type="InterPro" id="IPR017452">
    <property type="entry name" value="GPCR_Rhodpsn_7TM"/>
</dbReference>
<dbReference type="PANTHER" id="PTHR10489">
    <property type="entry name" value="CELL ADHESION MOLECULE"/>
    <property type="match status" value="1"/>
</dbReference>
<dbReference type="PANTHER" id="PTHR10489:SF956">
    <property type="entry name" value="TYPE-1 ANGIOTENSIN II RECEPTOR A"/>
    <property type="match status" value="1"/>
</dbReference>
<dbReference type="Pfam" id="PF00001">
    <property type="entry name" value="7tm_1"/>
    <property type="match status" value="1"/>
</dbReference>
<dbReference type="PRINTS" id="PR00241">
    <property type="entry name" value="ANGIOTENSINR"/>
</dbReference>
<dbReference type="PRINTS" id="PR00635">
    <property type="entry name" value="ANGIOTENSN1R"/>
</dbReference>
<dbReference type="PRINTS" id="PR00237">
    <property type="entry name" value="GPCRRHODOPSN"/>
</dbReference>
<dbReference type="SMART" id="SM01381">
    <property type="entry name" value="7TM_GPCR_Srsx"/>
    <property type="match status" value="1"/>
</dbReference>
<dbReference type="SUPFAM" id="SSF81321">
    <property type="entry name" value="Family A G protein-coupled receptor-like"/>
    <property type="match status" value="1"/>
</dbReference>
<dbReference type="PROSITE" id="PS00237">
    <property type="entry name" value="G_PROTEIN_RECEP_F1_1"/>
    <property type="match status" value="1"/>
</dbReference>
<dbReference type="PROSITE" id="PS50262">
    <property type="entry name" value="G_PROTEIN_RECEP_F1_2"/>
    <property type="match status" value="1"/>
</dbReference>